<protein>
    <recommendedName>
        <fullName evidence="4">Short chain dehydrogenase rstn4</fullName>
        <ecNumber evidence="6">1.1.1.-</ecNumber>
    </recommendedName>
    <alternativeName>
        <fullName evidence="4">Restricticin biosynthesis cluster protein 4</fullName>
    </alternativeName>
</protein>
<comment type="function">
    <text evidence="3">Short chain dehydrogenase; part of the gene cluster that mediates the biosynthesis of the tetrahydropyranyl antifungal agent restricticin that acts as an inhibitor of CYP51 and blocks the ergosterol biosynthesis (PubMed:33857369). The highly reducing polyketide synthase rstn3, the short chain dehydrogenase rstn4, the cyclase rstn5, the FAD-dependent monooxygenase rstn6 and the enoylreductase rstn7 are required to generate the first stable intermediate desmethylrestrictinol. Rstn3 with rstn7 biosynthesize the first polyketide chain intermediate that is reduced by rstn4, followed by epoxidation by rstn6 before 6-endo cyclization via epoxide opening by rstn5 leads to desmethylrestrictinol. The methyltransferase rstn1 then catalyzes the C4 O-methylation of desmethylrestrictinol to produce restrictinol, and the nonribosomal peptide synthetase rstn8 catalyzes the C3 esterification of restrictinol with glycine that leads to restricticin (PubMed:33857369).</text>
</comment>
<comment type="pathway">
    <text evidence="3">Antifungal biosynthesis.</text>
</comment>
<comment type="similarity">
    <text evidence="5">Belongs to the short-chain dehydrogenases/reductases (SDR) family.</text>
</comment>
<evidence type="ECO:0000250" key="1">
    <source>
        <dbReference type="UniProtKB" id="L0E2Z4"/>
    </source>
</evidence>
<evidence type="ECO:0000250" key="2">
    <source>
        <dbReference type="UniProtKB" id="O93868"/>
    </source>
</evidence>
<evidence type="ECO:0000269" key="3">
    <source>
    </source>
</evidence>
<evidence type="ECO:0000303" key="4">
    <source>
    </source>
</evidence>
<evidence type="ECO:0000305" key="5"/>
<evidence type="ECO:0000305" key="6">
    <source>
    </source>
</evidence>
<dbReference type="EC" id="1.1.1.-" evidence="6"/>
<dbReference type="EMBL" id="JNOM01000015">
    <property type="status" value="NOT_ANNOTATED_CDS"/>
    <property type="molecule type" value="Genomic_DNA"/>
</dbReference>
<dbReference type="Proteomes" id="UP000037505">
    <property type="component" value="Unassembled WGS sequence"/>
</dbReference>
<dbReference type="GO" id="GO:0016491">
    <property type="term" value="F:oxidoreductase activity"/>
    <property type="evidence" value="ECO:0007669"/>
    <property type="project" value="UniProtKB-KW"/>
</dbReference>
<dbReference type="Gene3D" id="3.40.50.720">
    <property type="entry name" value="NAD(P)-binding Rossmann-like Domain"/>
    <property type="match status" value="1"/>
</dbReference>
<dbReference type="InterPro" id="IPR036291">
    <property type="entry name" value="NAD(P)-bd_dom_sf"/>
</dbReference>
<dbReference type="InterPro" id="IPR002347">
    <property type="entry name" value="SDR_fam"/>
</dbReference>
<dbReference type="PANTHER" id="PTHR24320:SF252">
    <property type="entry name" value="DEHYDROGENASE_REDUCTASE FAMILY PROTEIN, PUTATIVE (AFU_ORTHOLOGUE AFUA_3G08550)-RELATED"/>
    <property type="match status" value="1"/>
</dbReference>
<dbReference type="PANTHER" id="PTHR24320">
    <property type="entry name" value="RETINOL DEHYDROGENASE"/>
    <property type="match status" value="1"/>
</dbReference>
<dbReference type="Pfam" id="PF00106">
    <property type="entry name" value="adh_short"/>
    <property type="match status" value="1"/>
</dbReference>
<dbReference type="SUPFAM" id="SSF51735">
    <property type="entry name" value="NAD(P)-binding Rossmann-fold domains"/>
    <property type="match status" value="1"/>
</dbReference>
<sequence>MAGYLPEPLRMMVTNPAISDFTSDGPLPYALRQKFTGWPPPPAAADISLASQTVLVTGATSGVGLEAARQLAQLGPRLLILGARNLSKADGVKRQLEQDTPHVAVQVAKLDLEDLSSVDRFVDGLHASAIHLDLALLNAGFFANDDRMTPDGYSSLFQVNFLSTAYLAFRLLPLLQTTTTAPEASPQGPRLVLVTSEAHAWTTFPVPPEPAENSLPILSSFRQKESLGSADDQYYRAKLLLALIGKELSRRLTTMQMATSVVITTPGFCASNFFPDSVMTRLIQLISARSIQQGGALHVFAATAQGPQMHGAYLRDGKPTGLSKFAEGPQGQILQQRLWVEMEQFLAGRGYLLSSILKPSSPLQIDGPV</sequence>
<feature type="chain" id="PRO_0000461551" description="Short chain dehydrogenase rstn4">
    <location>
        <begin position="1"/>
        <end position="369"/>
    </location>
</feature>
<feature type="active site" description="Proton donor" evidence="2">
    <location>
        <position position="234"/>
    </location>
</feature>
<feature type="active site" description="Lowers pKa of active site Tyr" evidence="2">
    <location>
        <position position="238"/>
    </location>
</feature>
<feature type="binding site" evidence="1">
    <location>
        <position position="88"/>
    </location>
    <ligand>
        <name>NADP(+)</name>
        <dbReference type="ChEBI" id="CHEBI:58349"/>
    </ligand>
</feature>
<feature type="binding site" evidence="1">
    <location>
        <position position="111"/>
    </location>
    <ligand>
        <name>NADP(+)</name>
        <dbReference type="ChEBI" id="CHEBI:58349"/>
    </ligand>
</feature>
<feature type="binding site" evidence="2">
    <location>
        <position position="138"/>
    </location>
    <ligand>
        <name>NADP(+)</name>
        <dbReference type="ChEBI" id="CHEBI:58349"/>
    </ligand>
</feature>
<feature type="binding site" evidence="2">
    <location>
        <position position="234"/>
    </location>
    <ligand>
        <name>NADP(+)</name>
        <dbReference type="ChEBI" id="CHEBI:58349"/>
    </ligand>
</feature>
<feature type="binding site" evidence="2">
    <location>
        <position position="238"/>
    </location>
    <ligand>
        <name>NADP(+)</name>
        <dbReference type="ChEBI" id="CHEBI:58349"/>
    </ligand>
</feature>
<proteinExistence type="inferred from homology"/>
<name>RSTN4_ASPN3</name>
<keyword id="KW-0521">NADP</keyword>
<keyword id="KW-0560">Oxidoreductase</keyword>
<keyword id="KW-1185">Reference proteome</keyword>
<organism>
    <name type="scientific">Aspergillus nomiae NRRL (strain ATCC 15546 / NRRL 13137 / CBS 260.88 / M93)</name>
    <dbReference type="NCBI Taxonomy" id="1509407"/>
    <lineage>
        <taxon>Eukaryota</taxon>
        <taxon>Fungi</taxon>
        <taxon>Dikarya</taxon>
        <taxon>Ascomycota</taxon>
        <taxon>Pezizomycotina</taxon>
        <taxon>Eurotiomycetes</taxon>
        <taxon>Eurotiomycetidae</taxon>
        <taxon>Eurotiales</taxon>
        <taxon>Aspergillaceae</taxon>
        <taxon>Aspergillus</taxon>
        <taxon>Aspergillus subgen. Circumdati</taxon>
    </lineage>
</organism>
<gene>
    <name evidence="4" type="primary">rstn4</name>
</gene>
<reference key="1">
    <citation type="journal article" date="2015" name="BMC Genomics">
        <title>Genomic sequence of the aflatoxigenic filamentous fungus Aspergillus nomius.</title>
        <authorList>
            <person name="Moore G.G."/>
            <person name="Mack B.M."/>
            <person name="Beltz S.B."/>
        </authorList>
    </citation>
    <scope>NUCLEOTIDE SEQUENCE [LARGE SCALE GENOMIC DNA]</scope>
    <source>
        <strain>ATCC 15546 / NRRL 13137 / CBS 260.88 / M93</strain>
    </source>
</reference>
<reference key="2">
    <citation type="journal article" date="2021" name="J. Am. Chem. Soc.">
        <title>Targeted genome mining reveals the biosynthetic gene clusters of natural product CYP51 inhibitors.</title>
        <authorList>
            <person name="Liu N."/>
            <person name="Abramyan E.D."/>
            <person name="Cheng W."/>
            <person name="Perlatti B."/>
            <person name="Harvey C.J.B."/>
            <person name="Bills G.F."/>
            <person name="Tang Y."/>
        </authorList>
    </citation>
    <scope>FUNCTION</scope>
    <scope>PATHWAY</scope>
</reference>
<accession>P9WEG6</accession>